<organism>
    <name type="scientific">Eumops perotis</name>
    <name type="common">Western bonneted bat</name>
    <name type="synonym">Molossus perotis</name>
    <dbReference type="NCBI Taxonomy" id="27620"/>
    <lineage>
        <taxon>Eukaryota</taxon>
        <taxon>Metazoa</taxon>
        <taxon>Chordata</taxon>
        <taxon>Craniata</taxon>
        <taxon>Vertebrata</taxon>
        <taxon>Euteleostomi</taxon>
        <taxon>Mammalia</taxon>
        <taxon>Eutheria</taxon>
        <taxon>Laurasiatheria</taxon>
        <taxon>Chiroptera</taxon>
        <taxon>Yangochiroptera</taxon>
        <taxon>Molossidae</taxon>
        <taxon>Eumops</taxon>
    </lineage>
</organism>
<feature type="chain" id="PRO_0000060961" description="Cytochrome b">
    <location>
        <begin position="1"/>
        <end position="176" status="greater than"/>
    </location>
</feature>
<feature type="transmembrane region" description="Helical" evidence="2">
    <location>
        <begin position="33"/>
        <end position="53"/>
    </location>
</feature>
<feature type="transmembrane region" description="Helical" evidence="2">
    <location>
        <begin position="77"/>
        <end position="98"/>
    </location>
</feature>
<feature type="transmembrane region" description="Helical" evidence="2">
    <location>
        <begin position="113"/>
        <end position="133"/>
    </location>
</feature>
<feature type="binding site" description="axial binding residue" evidence="2">
    <location>
        <position position="83"/>
    </location>
    <ligand>
        <name>heme b</name>
        <dbReference type="ChEBI" id="CHEBI:60344"/>
        <label>b562</label>
    </ligand>
    <ligandPart>
        <name>Fe</name>
        <dbReference type="ChEBI" id="CHEBI:18248"/>
    </ligandPart>
</feature>
<feature type="binding site" description="axial binding residue" evidence="2">
    <location>
        <position position="97"/>
    </location>
    <ligand>
        <name>heme b</name>
        <dbReference type="ChEBI" id="CHEBI:60344"/>
        <label>b566</label>
    </ligand>
    <ligandPart>
        <name>Fe</name>
        <dbReference type="ChEBI" id="CHEBI:18248"/>
    </ligandPart>
</feature>
<feature type="non-terminal residue">
    <location>
        <position position="176"/>
    </location>
</feature>
<keyword id="KW-0249">Electron transport</keyword>
<keyword id="KW-0349">Heme</keyword>
<keyword id="KW-0408">Iron</keyword>
<keyword id="KW-0472">Membrane</keyword>
<keyword id="KW-0479">Metal-binding</keyword>
<keyword id="KW-0496">Mitochondrion</keyword>
<keyword id="KW-0999">Mitochondrion inner membrane</keyword>
<keyword id="KW-0679">Respiratory chain</keyword>
<keyword id="KW-0812">Transmembrane</keyword>
<keyword id="KW-1133">Transmembrane helix</keyword>
<keyword id="KW-0813">Transport</keyword>
<keyword id="KW-0830">Ubiquinone</keyword>
<accession>Q33452</accession>
<geneLocation type="mitochondrion"/>
<evidence type="ECO:0000250" key="1"/>
<evidence type="ECO:0000250" key="2">
    <source>
        <dbReference type="UniProtKB" id="P00157"/>
    </source>
</evidence>
<evidence type="ECO:0000255" key="3">
    <source>
        <dbReference type="PROSITE-ProRule" id="PRU00968"/>
    </source>
</evidence>
<comment type="function">
    <text evidence="2">Component of the ubiquinol-cytochrome c reductase complex (complex III or cytochrome b-c1 complex) that is part of the mitochondrial respiratory chain. The b-c1 complex mediates electron transfer from ubiquinol to cytochrome c. Contributes to the generation of a proton gradient across the mitochondrial membrane that is then used for ATP synthesis.</text>
</comment>
<comment type="cofactor">
    <cofactor evidence="2">
        <name>heme b</name>
        <dbReference type="ChEBI" id="CHEBI:60344"/>
    </cofactor>
    <text evidence="2">Binds 2 heme b groups non-covalently.</text>
</comment>
<comment type="subunit">
    <text evidence="2">The cytochrome bc1 complex contains 11 subunits: 3 respiratory subunits (MT-CYB, CYC1 and UQCRFS1), 2 core proteins (UQCRC1 and UQCRC2) and 6 low-molecular weight proteins (UQCRH/QCR6, UQCRB/QCR7, UQCRQ/QCR8, UQCR10/QCR9, UQCR11/QCR10 and a cleavage product of UQCRFS1). This cytochrome bc1 complex then forms a dimer.</text>
</comment>
<comment type="subcellular location">
    <subcellularLocation>
        <location evidence="2">Mitochondrion inner membrane</location>
        <topology evidence="2">Multi-pass membrane protein</topology>
    </subcellularLocation>
</comment>
<comment type="miscellaneous">
    <text evidence="1">Heme 1 (or BL or b562) is low-potential and absorbs at about 562 nm, and heme 2 (or BH or b566) is high-potential and absorbs at about 566 nm.</text>
</comment>
<comment type="similarity">
    <text evidence="3">Belongs to the cytochrome b family.</text>
</comment>
<comment type="caution">
    <text evidence="2">The full-length protein contains only eight transmembrane helices, not nine as predicted by bioinformatics tools.</text>
</comment>
<gene>
    <name type="primary">MT-CYB</name>
    <name type="synonym">COB</name>
    <name type="synonym">CYTB</name>
    <name type="synonym">MTCYB</name>
</gene>
<sequence length="176" mass="19659">MTNIRKSHPLIKIVNEAFIDLPAPSNISSWWNFGSLLGVCLTMQIMTGLFLAMHYTSDTATAFNSVTHICRDVNYGWLLRYLHANGASMFFICLYLHIGRGLYYGSYTYTETWNVGIILLFAVMATAFMGYVLPWGQMSSWGATVITNLLSAIPYIGTDLVGWIWGGFSVDKATLT</sequence>
<name>CYB_EUMPE</name>
<reference key="1">
    <citation type="journal article" date="1994" name="J. Mammal.">
        <title>Familial affinity of Tomopeas ravus (Chiroptera) based on protein electrophoretic and cytochrome b sequence data.</title>
        <authorList>
            <person name="Sudman P.D."/>
            <person name="Barkley L.J."/>
            <person name="Hafner M.S."/>
        </authorList>
    </citation>
    <scope>NUCLEOTIDE SEQUENCE [GENOMIC DNA]</scope>
    <source>
        <strain>Isolate LSUMZ 27211</strain>
        <tissue>Kidney</tissue>
        <tissue>Liver</tissue>
    </source>
</reference>
<dbReference type="EMBL" id="L19720">
    <property type="protein sequence ID" value="AAA17766.1"/>
    <property type="molecule type" value="Genomic_DNA"/>
</dbReference>
<dbReference type="SMR" id="Q33452"/>
<dbReference type="GO" id="GO:0005743">
    <property type="term" value="C:mitochondrial inner membrane"/>
    <property type="evidence" value="ECO:0007669"/>
    <property type="project" value="UniProtKB-SubCell"/>
</dbReference>
<dbReference type="GO" id="GO:0046872">
    <property type="term" value="F:metal ion binding"/>
    <property type="evidence" value="ECO:0007669"/>
    <property type="project" value="UniProtKB-KW"/>
</dbReference>
<dbReference type="GO" id="GO:0008121">
    <property type="term" value="F:ubiquinol-cytochrome-c reductase activity"/>
    <property type="evidence" value="ECO:0007669"/>
    <property type="project" value="TreeGrafter"/>
</dbReference>
<dbReference type="GO" id="GO:0006122">
    <property type="term" value="P:mitochondrial electron transport, ubiquinol to cytochrome c"/>
    <property type="evidence" value="ECO:0007669"/>
    <property type="project" value="TreeGrafter"/>
</dbReference>
<dbReference type="CDD" id="cd00284">
    <property type="entry name" value="Cytochrome_b_N"/>
    <property type="match status" value="1"/>
</dbReference>
<dbReference type="Gene3D" id="1.20.810.10">
    <property type="entry name" value="Cytochrome Bc1 Complex, Chain C"/>
    <property type="match status" value="1"/>
</dbReference>
<dbReference type="InterPro" id="IPR005797">
    <property type="entry name" value="Cyt_b/b6_N"/>
</dbReference>
<dbReference type="InterPro" id="IPR027387">
    <property type="entry name" value="Cytb/b6-like_sf"/>
</dbReference>
<dbReference type="InterPro" id="IPR048259">
    <property type="entry name" value="Cytochrome_b_N_euk/bac"/>
</dbReference>
<dbReference type="InterPro" id="IPR016174">
    <property type="entry name" value="Di-haem_cyt_TM"/>
</dbReference>
<dbReference type="PANTHER" id="PTHR19271">
    <property type="entry name" value="CYTOCHROME B"/>
    <property type="match status" value="1"/>
</dbReference>
<dbReference type="PANTHER" id="PTHR19271:SF16">
    <property type="entry name" value="CYTOCHROME B"/>
    <property type="match status" value="1"/>
</dbReference>
<dbReference type="Pfam" id="PF00033">
    <property type="entry name" value="Cytochrome_B"/>
    <property type="match status" value="1"/>
</dbReference>
<dbReference type="SUPFAM" id="SSF81342">
    <property type="entry name" value="Transmembrane di-heme cytochromes"/>
    <property type="match status" value="1"/>
</dbReference>
<dbReference type="PROSITE" id="PS51002">
    <property type="entry name" value="CYTB_NTER"/>
    <property type="match status" value="1"/>
</dbReference>
<proteinExistence type="inferred from homology"/>
<protein>
    <recommendedName>
        <fullName>Cytochrome b</fullName>
    </recommendedName>
    <alternativeName>
        <fullName>Complex III subunit 3</fullName>
    </alternativeName>
    <alternativeName>
        <fullName>Complex III subunit III</fullName>
    </alternativeName>
    <alternativeName>
        <fullName>Cytochrome b-c1 complex subunit 3</fullName>
    </alternativeName>
    <alternativeName>
        <fullName>Ubiquinol-cytochrome-c reductase complex cytochrome b subunit</fullName>
    </alternativeName>
</protein>